<keyword id="KW-0143">Chaperone</keyword>
<keyword id="KW-0963">Cytoplasm</keyword>
<keyword id="KW-0342">GTP-binding</keyword>
<keyword id="KW-0996">Nickel insertion</keyword>
<keyword id="KW-0547">Nucleotide-binding</keyword>
<keyword id="KW-1185">Reference proteome</keyword>
<reference key="1">
    <citation type="book" date="2006" name="Gram positive pathogens, 2nd edition">
        <title>The Staphylococcus aureus NCTC 8325 genome.</title>
        <editorList>
            <person name="Fischetti V."/>
            <person name="Novick R."/>
            <person name="Ferretti J."/>
            <person name="Portnoy D."/>
            <person name="Rood J."/>
        </editorList>
        <authorList>
            <person name="Gillaspy A.F."/>
            <person name="Worrell V."/>
            <person name="Orvis J."/>
            <person name="Roe B.A."/>
            <person name="Dyer D.W."/>
            <person name="Iandolo J.J."/>
        </authorList>
    </citation>
    <scope>NUCLEOTIDE SEQUENCE [LARGE SCALE GENOMIC DNA]</scope>
    <source>
        <strain>NCTC 8325 / PS 47</strain>
    </source>
</reference>
<comment type="function">
    <text evidence="1">Facilitates the functional incorporation of the urease nickel metallocenter. This process requires GTP hydrolysis, probably effectuated by UreG.</text>
</comment>
<comment type="subunit">
    <text evidence="1">Homodimer. UreD, UreF and UreG form a complex that acts as a GTP-hydrolysis-dependent molecular chaperone, activating the urease apoprotein by helping to assemble the nickel containing metallocenter of UreC. The UreE protein probably delivers the nickel.</text>
</comment>
<comment type="subcellular location">
    <subcellularLocation>
        <location evidence="1">Cytoplasm</location>
    </subcellularLocation>
</comment>
<comment type="similarity">
    <text evidence="1">Belongs to the SIMIBI class G3E GTPase family. UreG subfamily.</text>
</comment>
<protein>
    <recommendedName>
        <fullName evidence="1">Urease accessory protein UreG</fullName>
    </recommendedName>
</protein>
<name>UREG_STAA8</name>
<organism>
    <name type="scientific">Staphylococcus aureus (strain NCTC 8325 / PS 47)</name>
    <dbReference type="NCBI Taxonomy" id="93061"/>
    <lineage>
        <taxon>Bacteria</taxon>
        <taxon>Bacillati</taxon>
        <taxon>Bacillota</taxon>
        <taxon>Bacilli</taxon>
        <taxon>Bacillales</taxon>
        <taxon>Staphylococcaceae</taxon>
        <taxon>Staphylococcus</taxon>
    </lineage>
</organism>
<dbReference type="EMBL" id="CP000253">
    <property type="protein sequence ID" value="ABD31576.1"/>
    <property type="molecule type" value="Genomic_DNA"/>
</dbReference>
<dbReference type="RefSeq" id="WP_000002973.1">
    <property type="nucleotide sequence ID" value="NZ_LS483365.1"/>
</dbReference>
<dbReference type="RefSeq" id="YP_501025.1">
    <property type="nucleotide sequence ID" value="NC_007795.1"/>
</dbReference>
<dbReference type="SMR" id="Q2G273"/>
<dbReference type="STRING" id="93061.SAOUHSC_02564"/>
<dbReference type="PaxDb" id="1280-SAXN108_2541"/>
<dbReference type="GeneID" id="3921561"/>
<dbReference type="KEGG" id="sao:SAOUHSC_02564"/>
<dbReference type="PATRIC" id="fig|93061.5.peg.2313"/>
<dbReference type="eggNOG" id="COG0378">
    <property type="taxonomic scope" value="Bacteria"/>
</dbReference>
<dbReference type="HOGENOM" id="CLU_072144_1_0_9"/>
<dbReference type="OrthoDB" id="9802035at2"/>
<dbReference type="PRO" id="PR:Q2G273"/>
<dbReference type="Proteomes" id="UP000008816">
    <property type="component" value="Chromosome"/>
</dbReference>
<dbReference type="GO" id="GO:0005737">
    <property type="term" value="C:cytoplasm"/>
    <property type="evidence" value="ECO:0007669"/>
    <property type="project" value="UniProtKB-SubCell"/>
</dbReference>
<dbReference type="GO" id="GO:0005525">
    <property type="term" value="F:GTP binding"/>
    <property type="evidence" value="ECO:0007669"/>
    <property type="project" value="UniProtKB-KW"/>
</dbReference>
<dbReference type="GO" id="GO:0003924">
    <property type="term" value="F:GTPase activity"/>
    <property type="evidence" value="ECO:0007669"/>
    <property type="project" value="InterPro"/>
</dbReference>
<dbReference type="GO" id="GO:0016151">
    <property type="term" value="F:nickel cation binding"/>
    <property type="evidence" value="ECO:0007669"/>
    <property type="project" value="UniProtKB-UniRule"/>
</dbReference>
<dbReference type="GO" id="GO:0043419">
    <property type="term" value="P:urea catabolic process"/>
    <property type="evidence" value="ECO:0007669"/>
    <property type="project" value="InterPro"/>
</dbReference>
<dbReference type="CDD" id="cd05540">
    <property type="entry name" value="UreG"/>
    <property type="match status" value="1"/>
</dbReference>
<dbReference type="Gene3D" id="3.40.50.300">
    <property type="entry name" value="P-loop containing nucleotide triphosphate hydrolases"/>
    <property type="match status" value="1"/>
</dbReference>
<dbReference type="HAMAP" id="MF_01389">
    <property type="entry name" value="UreG"/>
    <property type="match status" value="1"/>
</dbReference>
<dbReference type="InterPro" id="IPR003495">
    <property type="entry name" value="CobW/HypB/UreG_nucleotide-bd"/>
</dbReference>
<dbReference type="InterPro" id="IPR027417">
    <property type="entry name" value="P-loop_NTPase"/>
</dbReference>
<dbReference type="InterPro" id="IPR004400">
    <property type="entry name" value="UreG"/>
</dbReference>
<dbReference type="NCBIfam" id="TIGR00101">
    <property type="entry name" value="ureG"/>
    <property type="match status" value="1"/>
</dbReference>
<dbReference type="PANTHER" id="PTHR31715">
    <property type="entry name" value="UREASE ACCESSORY PROTEIN G"/>
    <property type="match status" value="1"/>
</dbReference>
<dbReference type="PANTHER" id="PTHR31715:SF0">
    <property type="entry name" value="UREASE ACCESSORY PROTEIN G"/>
    <property type="match status" value="1"/>
</dbReference>
<dbReference type="Pfam" id="PF02492">
    <property type="entry name" value="cobW"/>
    <property type="match status" value="1"/>
</dbReference>
<dbReference type="PIRSF" id="PIRSF005624">
    <property type="entry name" value="Ni-bind_GTPase"/>
    <property type="match status" value="1"/>
</dbReference>
<dbReference type="SUPFAM" id="SSF52540">
    <property type="entry name" value="P-loop containing nucleoside triphosphate hydrolases"/>
    <property type="match status" value="1"/>
</dbReference>
<accession>Q2G273</accession>
<sequence>MANPIKIGIGGPVGAGKTQLIEKVVKRLSKEMSIGVITNDIYTKEDEKILVNSGVLPESRIIGVETGGCPHTAIREDASMNFAAIDELLERHDDIELIFIESGGDNLAATFSPELVDFSIYIIDVAQGEKIPRKGGQGMIKSDFFVINKTDLAPYVGASLEQMAEDTKVFRGKRPFTFTNLKTDEGLDEVIDWIERDTLLKGLS</sequence>
<proteinExistence type="inferred from homology"/>
<feature type="chain" id="PRO_1000145225" description="Urease accessory protein UreG">
    <location>
        <begin position="1"/>
        <end position="204"/>
    </location>
</feature>
<feature type="binding site" evidence="1">
    <location>
        <begin position="11"/>
        <end position="18"/>
    </location>
    <ligand>
        <name>GTP</name>
        <dbReference type="ChEBI" id="CHEBI:37565"/>
    </ligand>
</feature>
<evidence type="ECO:0000255" key="1">
    <source>
        <dbReference type="HAMAP-Rule" id="MF_01389"/>
    </source>
</evidence>
<gene>
    <name evidence="1" type="primary">ureG</name>
    <name type="ordered locus">SAOUHSC_02564</name>
</gene>